<sequence>MTVTADPVTLMKQEVGKAAAALVKSGSIVGLGTGSTTAYTIQYLGDRLKSGELTDIVGIPTSFQSEVLSKQYGVPLTTLDAVDHIDIAIDGADEVDPHKNLIKGGGAAHTREKVVDYLANQFIVVVDSGKLVDRLGSVFAVPVEVIPMAITPVTNAIKQLGGKPELRMGVKKAGPVITDQGNFVLDVRFDSIDDPVNLEKILNNIPGVLENGIFVNCADIVLVGEVKDGQPLVRRL</sequence>
<feature type="chain" id="PRO_0000158380" description="Ribose-5-phosphate isomerase A">
    <location>
        <begin position="1"/>
        <end position="236"/>
    </location>
</feature>
<feature type="active site" description="Proton acceptor" evidence="1">
    <location>
        <position position="112"/>
    </location>
</feature>
<feature type="binding site" evidence="1">
    <location>
        <begin position="33"/>
        <end position="36"/>
    </location>
    <ligand>
        <name>substrate</name>
    </ligand>
</feature>
<feature type="binding site" evidence="1">
    <location>
        <begin position="90"/>
        <end position="93"/>
    </location>
    <ligand>
        <name>substrate</name>
    </ligand>
</feature>
<feature type="binding site" evidence="1">
    <location>
        <begin position="103"/>
        <end position="106"/>
    </location>
    <ligand>
        <name>substrate</name>
    </ligand>
</feature>
<feature type="binding site" evidence="1">
    <location>
        <position position="130"/>
    </location>
    <ligand>
        <name>substrate</name>
    </ligand>
</feature>
<keyword id="KW-0413">Isomerase</keyword>
<keyword id="KW-1185">Reference proteome</keyword>
<evidence type="ECO:0000255" key="1">
    <source>
        <dbReference type="HAMAP-Rule" id="MF_00170"/>
    </source>
</evidence>
<name>RPIA_NOSS1</name>
<proteinExistence type="inferred from homology"/>
<protein>
    <recommendedName>
        <fullName evidence="1">Ribose-5-phosphate isomerase A</fullName>
        <ecNumber evidence="1">5.3.1.6</ecNumber>
    </recommendedName>
    <alternativeName>
        <fullName evidence="1">Phosphoriboisomerase A</fullName>
        <shortName evidence="1">PRI</shortName>
    </alternativeName>
</protein>
<gene>
    <name evidence="1" type="primary">rpiA</name>
    <name type="ordered locus">all0888</name>
</gene>
<organism>
    <name type="scientific">Nostoc sp. (strain PCC 7120 / SAG 25.82 / UTEX 2576)</name>
    <dbReference type="NCBI Taxonomy" id="103690"/>
    <lineage>
        <taxon>Bacteria</taxon>
        <taxon>Bacillati</taxon>
        <taxon>Cyanobacteriota</taxon>
        <taxon>Cyanophyceae</taxon>
        <taxon>Nostocales</taxon>
        <taxon>Nostocaceae</taxon>
        <taxon>Nostoc</taxon>
    </lineage>
</organism>
<accession>Q8YYG2</accession>
<reference key="1">
    <citation type="journal article" date="2001" name="DNA Res.">
        <title>Complete genomic sequence of the filamentous nitrogen-fixing cyanobacterium Anabaena sp. strain PCC 7120.</title>
        <authorList>
            <person name="Kaneko T."/>
            <person name="Nakamura Y."/>
            <person name="Wolk C.P."/>
            <person name="Kuritz T."/>
            <person name="Sasamoto S."/>
            <person name="Watanabe A."/>
            <person name="Iriguchi M."/>
            <person name="Ishikawa A."/>
            <person name="Kawashima K."/>
            <person name="Kimura T."/>
            <person name="Kishida Y."/>
            <person name="Kohara M."/>
            <person name="Matsumoto M."/>
            <person name="Matsuno A."/>
            <person name="Muraki A."/>
            <person name="Nakazaki N."/>
            <person name="Shimpo S."/>
            <person name="Sugimoto M."/>
            <person name="Takazawa M."/>
            <person name="Yamada M."/>
            <person name="Yasuda M."/>
            <person name="Tabata S."/>
        </authorList>
    </citation>
    <scope>NUCLEOTIDE SEQUENCE [LARGE SCALE GENOMIC DNA]</scope>
    <source>
        <strain>PCC 7120 / SAG 25.82 / UTEX 2576</strain>
    </source>
</reference>
<dbReference type="EC" id="5.3.1.6" evidence="1"/>
<dbReference type="EMBL" id="BA000019">
    <property type="protein sequence ID" value="BAB72845.1"/>
    <property type="molecule type" value="Genomic_DNA"/>
</dbReference>
<dbReference type="PIR" id="AE1917">
    <property type="entry name" value="AE1917"/>
</dbReference>
<dbReference type="RefSeq" id="WP_010995062.1">
    <property type="nucleotide sequence ID" value="NZ_RSCN01000006.1"/>
</dbReference>
<dbReference type="SMR" id="Q8YYG2"/>
<dbReference type="STRING" id="103690.gene:10492901"/>
<dbReference type="KEGG" id="ana:all0888"/>
<dbReference type="eggNOG" id="COG0120">
    <property type="taxonomic scope" value="Bacteria"/>
</dbReference>
<dbReference type="OrthoDB" id="5870696at2"/>
<dbReference type="UniPathway" id="UPA00115">
    <property type="reaction ID" value="UER00412"/>
</dbReference>
<dbReference type="Proteomes" id="UP000002483">
    <property type="component" value="Chromosome"/>
</dbReference>
<dbReference type="GO" id="GO:0005829">
    <property type="term" value="C:cytosol"/>
    <property type="evidence" value="ECO:0007669"/>
    <property type="project" value="TreeGrafter"/>
</dbReference>
<dbReference type="GO" id="GO:0004751">
    <property type="term" value="F:ribose-5-phosphate isomerase activity"/>
    <property type="evidence" value="ECO:0007669"/>
    <property type="project" value="UniProtKB-UniRule"/>
</dbReference>
<dbReference type="GO" id="GO:0006014">
    <property type="term" value="P:D-ribose metabolic process"/>
    <property type="evidence" value="ECO:0007669"/>
    <property type="project" value="TreeGrafter"/>
</dbReference>
<dbReference type="GO" id="GO:0009052">
    <property type="term" value="P:pentose-phosphate shunt, non-oxidative branch"/>
    <property type="evidence" value="ECO:0007669"/>
    <property type="project" value="UniProtKB-UniRule"/>
</dbReference>
<dbReference type="CDD" id="cd01398">
    <property type="entry name" value="RPI_A"/>
    <property type="match status" value="1"/>
</dbReference>
<dbReference type="FunFam" id="3.30.70.260:FF:000018">
    <property type="entry name" value="Ribose-5-phosphate isomerase A"/>
    <property type="match status" value="1"/>
</dbReference>
<dbReference type="FunFam" id="3.40.50.1360:FF:000001">
    <property type="entry name" value="Ribose-5-phosphate isomerase A"/>
    <property type="match status" value="1"/>
</dbReference>
<dbReference type="Gene3D" id="3.30.70.260">
    <property type="match status" value="1"/>
</dbReference>
<dbReference type="Gene3D" id="3.40.50.1360">
    <property type="match status" value="1"/>
</dbReference>
<dbReference type="HAMAP" id="MF_00170">
    <property type="entry name" value="Rib_5P_isom_A"/>
    <property type="match status" value="1"/>
</dbReference>
<dbReference type="InterPro" id="IPR037171">
    <property type="entry name" value="NagB/RpiA_transferase-like"/>
</dbReference>
<dbReference type="InterPro" id="IPR020672">
    <property type="entry name" value="Ribose5P_isomerase_typA_subgr"/>
</dbReference>
<dbReference type="InterPro" id="IPR004788">
    <property type="entry name" value="Ribose5P_isomerase_type_A"/>
</dbReference>
<dbReference type="NCBIfam" id="NF001924">
    <property type="entry name" value="PRK00702.1"/>
    <property type="match status" value="1"/>
</dbReference>
<dbReference type="NCBIfam" id="TIGR00021">
    <property type="entry name" value="rpiA"/>
    <property type="match status" value="1"/>
</dbReference>
<dbReference type="PANTHER" id="PTHR11934">
    <property type="entry name" value="RIBOSE-5-PHOSPHATE ISOMERASE"/>
    <property type="match status" value="1"/>
</dbReference>
<dbReference type="PANTHER" id="PTHR11934:SF0">
    <property type="entry name" value="RIBOSE-5-PHOSPHATE ISOMERASE"/>
    <property type="match status" value="1"/>
</dbReference>
<dbReference type="Pfam" id="PF06026">
    <property type="entry name" value="Rib_5-P_isom_A"/>
    <property type="match status" value="1"/>
</dbReference>
<dbReference type="SUPFAM" id="SSF75445">
    <property type="entry name" value="D-ribose-5-phosphate isomerase (RpiA), lid domain"/>
    <property type="match status" value="1"/>
</dbReference>
<dbReference type="SUPFAM" id="SSF100950">
    <property type="entry name" value="NagB/RpiA/CoA transferase-like"/>
    <property type="match status" value="1"/>
</dbReference>
<comment type="function">
    <text evidence="1">Catalyzes the reversible conversion of ribose-5-phosphate to ribulose 5-phosphate.</text>
</comment>
<comment type="catalytic activity">
    <reaction evidence="1">
        <text>aldehydo-D-ribose 5-phosphate = D-ribulose 5-phosphate</text>
        <dbReference type="Rhea" id="RHEA:14657"/>
        <dbReference type="ChEBI" id="CHEBI:58121"/>
        <dbReference type="ChEBI" id="CHEBI:58273"/>
        <dbReference type="EC" id="5.3.1.6"/>
    </reaction>
</comment>
<comment type="pathway">
    <text evidence="1">Carbohydrate degradation; pentose phosphate pathway; D-ribose 5-phosphate from D-ribulose 5-phosphate (non-oxidative stage): step 1/1.</text>
</comment>
<comment type="subunit">
    <text evidence="1">Homodimer.</text>
</comment>
<comment type="similarity">
    <text evidence="1">Belongs to the ribose 5-phosphate isomerase family.</text>
</comment>